<keyword id="KW-0963">Cytoplasm</keyword>
<keyword id="KW-0489">Methyltransferase</keyword>
<keyword id="KW-0694">RNA-binding</keyword>
<keyword id="KW-0698">rRNA processing</keyword>
<keyword id="KW-0949">S-adenosyl-L-methionine</keyword>
<keyword id="KW-0808">Transferase</keyword>
<evidence type="ECO:0000255" key="1">
    <source>
        <dbReference type="HAMAP-Rule" id="MF_00607"/>
    </source>
</evidence>
<feature type="chain" id="PRO_1000130293" description="Ribosomal RNA small subunit methyltransferase A">
    <location>
        <begin position="1"/>
        <end position="292"/>
    </location>
</feature>
<feature type="binding site" evidence="1">
    <location>
        <position position="28"/>
    </location>
    <ligand>
        <name>S-adenosyl-L-methionine</name>
        <dbReference type="ChEBI" id="CHEBI:59789"/>
    </ligand>
</feature>
<feature type="binding site" evidence="1">
    <location>
        <position position="30"/>
    </location>
    <ligand>
        <name>S-adenosyl-L-methionine</name>
        <dbReference type="ChEBI" id="CHEBI:59789"/>
    </ligand>
</feature>
<feature type="binding site" evidence="1">
    <location>
        <position position="55"/>
    </location>
    <ligand>
        <name>S-adenosyl-L-methionine</name>
        <dbReference type="ChEBI" id="CHEBI:59789"/>
    </ligand>
</feature>
<feature type="binding site" evidence="1">
    <location>
        <position position="77"/>
    </location>
    <ligand>
        <name>S-adenosyl-L-methionine</name>
        <dbReference type="ChEBI" id="CHEBI:59789"/>
    </ligand>
</feature>
<feature type="binding site" evidence="1">
    <location>
        <position position="103"/>
    </location>
    <ligand>
        <name>S-adenosyl-L-methionine</name>
        <dbReference type="ChEBI" id="CHEBI:59789"/>
    </ligand>
</feature>
<feature type="binding site" evidence="1">
    <location>
        <position position="123"/>
    </location>
    <ligand>
        <name>S-adenosyl-L-methionine</name>
        <dbReference type="ChEBI" id="CHEBI:59789"/>
    </ligand>
</feature>
<name>RSMA_METRJ</name>
<accession>B1LVB8</accession>
<gene>
    <name evidence="1" type="primary">rsmA</name>
    <name evidence="1" type="synonym">ksgA</name>
    <name type="ordered locus">Mrad2831_0552</name>
</gene>
<dbReference type="EC" id="2.1.1.182" evidence="1"/>
<dbReference type="EMBL" id="CP001001">
    <property type="protein sequence ID" value="ACB22563.1"/>
    <property type="molecule type" value="Genomic_DNA"/>
</dbReference>
<dbReference type="RefSeq" id="WP_012317559.1">
    <property type="nucleotide sequence ID" value="NC_010505.1"/>
</dbReference>
<dbReference type="SMR" id="B1LVB8"/>
<dbReference type="STRING" id="426355.Mrad2831_0552"/>
<dbReference type="GeneID" id="6136565"/>
<dbReference type="KEGG" id="mrd:Mrad2831_0552"/>
<dbReference type="eggNOG" id="COG0030">
    <property type="taxonomic scope" value="Bacteria"/>
</dbReference>
<dbReference type="HOGENOM" id="CLU_041220_0_1_5"/>
<dbReference type="OrthoDB" id="9814755at2"/>
<dbReference type="Proteomes" id="UP000006589">
    <property type="component" value="Chromosome"/>
</dbReference>
<dbReference type="GO" id="GO:0005829">
    <property type="term" value="C:cytosol"/>
    <property type="evidence" value="ECO:0007669"/>
    <property type="project" value="TreeGrafter"/>
</dbReference>
<dbReference type="GO" id="GO:0052908">
    <property type="term" value="F:16S rRNA (adenine(1518)-N(6)/adenine(1519)-N(6))-dimethyltransferase activity"/>
    <property type="evidence" value="ECO:0007669"/>
    <property type="project" value="UniProtKB-EC"/>
</dbReference>
<dbReference type="GO" id="GO:0003723">
    <property type="term" value="F:RNA binding"/>
    <property type="evidence" value="ECO:0007669"/>
    <property type="project" value="UniProtKB-KW"/>
</dbReference>
<dbReference type="CDD" id="cd02440">
    <property type="entry name" value="AdoMet_MTases"/>
    <property type="match status" value="1"/>
</dbReference>
<dbReference type="FunFam" id="1.10.8.100:FF:000001">
    <property type="entry name" value="Ribosomal RNA small subunit methyltransferase A"/>
    <property type="match status" value="1"/>
</dbReference>
<dbReference type="Gene3D" id="1.10.8.100">
    <property type="entry name" value="Ribosomal RNA adenine dimethylase-like, domain 2"/>
    <property type="match status" value="1"/>
</dbReference>
<dbReference type="Gene3D" id="3.40.50.150">
    <property type="entry name" value="Vaccinia Virus protein VP39"/>
    <property type="match status" value="1"/>
</dbReference>
<dbReference type="HAMAP" id="MF_00607">
    <property type="entry name" value="16SrRNA_methyltr_A"/>
    <property type="match status" value="1"/>
</dbReference>
<dbReference type="InterPro" id="IPR001737">
    <property type="entry name" value="KsgA/Erm"/>
</dbReference>
<dbReference type="InterPro" id="IPR023165">
    <property type="entry name" value="rRNA_Ade_diMease-like_C"/>
</dbReference>
<dbReference type="InterPro" id="IPR020596">
    <property type="entry name" value="rRNA_Ade_Mease_Trfase_CS"/>
</dbReference>
<dbReference type="InterPro" id="IPR020598">
    <property type="entry name" value="rRNA_Ade_methylase_Trfase_N"/>
</dbReference>
<dbReference type="InterPro" id="IPR011530">
    <property type="entry name" value="rRNA_adenine_dimethylase"/>
</dbReference>
<dbReference type="InterPro" id="IPR029063">
    <property type="entry name" value="SAM-dependent_MTases_sf"/>
</dbReference>
<dbReference type="NCBIfam" id="TIGR00755">
    <property type="entry name" value="ksgA"/>
    <property type="match status" value="1"/>
</dbReference>
<dbReference type="PANTHER" id="PTHR11727">
    <property type="entry name" value="DIMETHYLADENOSINE TRANSFERASE"/>
    <property type="match status" value="1"/>
</dbReference>
<dbReference type="PANTHER" id="PTHR11727:SF7">
    <property type="entry name" value="DIMETHYLADENOSINE TRANSFERASE-RELATED"/>
    <property type="match status" value="1"/>
</dbReference>
<dbReference type="Pfam" id="PF00398">
    <property type="entry name" value="RrnaAD"/>
    <property type="match status" value="1"/>
</dbReference>
<dbReference type="SMART" id="SM00650">
    <property type="entry name" value="rADc"/>
    <property type="match status" value="1"/>
</dbReference>
<dbReference type="SUPFAM" id="SSF53335">
    <property type="entry name" value="S-adenosyl-L-methionine-dependent methyltransferases"/>
    <property type="match status" value="1"/>
</dbReference>
<dbReference type="PROSITE" id="PS01131">
    <property type="entry name" value="RRNA_A_DIMETH"/>
    <property type="match status" value="1"/>
</dbReference>
<dbReference type="PROSITE" id="PS51689">
    <property type="entry name" value="SAM_RNA_A_N6_MT"/>
    <property type="match status" value="1"/>
</dbReference>
<sequence>MSAGDGLPPLREVVARHGLEPKKALGQNFLYDLNLTGRIARAAGPLAGVTVVEVGPGPGGLTRALLAEGAARVVAIERDPRALPALAEIAAHYPGRLEVVDADALAFDPRPLVGDAPARIVANLPYNVGTALLTGWLDGEAWPPWWDQAVLMFQREVAERIVAGPEERADYGRLGVLCGWRTEAEILFDVSPSAFVPPPKVTSSVVRLVPRAQPLPCRAGALEAVTRAAFGQRRKMLRQSLKALTPAAGDLLAAAGLSETARAEEIPVAGFVDLANRWDAHRKAGAPVGTPA</sequence>
<proteinExistence type="inferred from homology"/>
<reference key="1">
    <citation type="submission" date="2008-03" db="EMBL/GenBank/DDBJ databases">
        <title>Complete sequence of chromosome of Methylobacterium radiotolerans JCM 2831.</title>
        <authorList>
            <consortium name="US DOE Joint Genome Institute"/>
            <person name="Copeland A."/>
            <person name="Lucas S."/>
            <person name="Lapidus A."/>
            <person name="Glavina del Rio T."/>
            <person name="Dalin E."/>
            <person name="Tice H."/>
            <person name="Bruce D."/>
            <person name="Goodwin L."/>
            <person name="Pitluck S."/>
            <person name="Kiss H."/>
            <person name="Brettin T."/>
            <person name="Detter J.C."/>
            <person name="Han C."/>
            <person name="Kuske C.R."/>
            <person name="Schmutz J."/>
            <person name="Larimer F."/>
            <person name="Land M."/>
            <person name="Hauser L."/>
            <person name="Kyrpides N."/>
            <person name="Mikhailova N."/>
            <person name="Marx C.J."/>
            <person name="Richardson P."/>
        </authorList>
    </citation>
    <scope>NUCLEOTIDE SEQUENCE [LARGE SCALE GENOMIC DNA]</scope>
    <source>
        <strain>ATCC 27329 / DSM 1819 / JCM 2831 / NBRC 15690 / NCIMB 10815 / 0-1</strain>
    </source>
</reference>
<protein>
    <recommendedName>
        <fullName evidence="1">Ribosomal RNA small subunit methyltransferase A</fullName>
        <ecNumber evidence="1">2.1.1.182</ecNumber>
    </recommendedName>
    <alternativeName>
        <fullName evidence="1">16S rRNA (adenine(1518)-N(6)/adenine(1519)-N(6))-dimethyltransferase</fullName>
    </alternativeName>
    <alternativeName>
        <fullName evidence="1">16S rRNA dimethyladenosine transferase</fullName>
    </alternativeName>
    <alternativeName>
        <fullName evidence="1">16S rRNA dimethylase</fullName>
    </alternativeName>
    <alternativeName>
        <fullName evidence="1">S-adenosylmethionine-6-N', N'-adenosyl(rRNA) dimethyltransferase</fullName>
    </alternativeName>
</protein>
<organism>
    <name type="scientific">Methylobacterium radiotolerans (strain ATCC 27329 / DSM 1819 / JCM 2831 / NBRC 15690 / NCIMB 10815 / 0-1)</name>
    <dbReference type="NCBI Taxonomy" id="426355"/>
    <lineage>
        <taxon>Bacteria</taxon>
        <taxon>Pseudomonadati</taxon>
        <taxon>Pseudomonadota</taxon>
        <taxon>Alphaproteobacteria</taxon>
        <taxon>Hyphomicrobiales</taxon>
        <taxon>Methylobacteriaceae</taxon>
        <taxon>Methylobacterium</taxon>
    </lineage>
</organism>
<comment type="function">
    <text evidence="1">Specifically dimethylates two adjacent adenosines (A1518 and A1519) in the loop of a conserved hairpin near the 3'-end of 16S rRNA in the 30S particle. May play a critical role in biogenesis of 30S subunits.</text>
</comment>
<comment type="catalytic activity">
    <reaction evidence="1">
        <text>adenosine(1518)/adenosine(1519) in 16S rRNA + 4 S-adenosyl-L-methionine = N(6)-dimethyladenosine(1518)/N(6)-dimethyladenosine(1519) in 16S rRNA + 4 S-adenosyl-L-homocysteine + 4 H(+)</text>
        <dbReference type="Rhea" id="RHEA:19609"/>
        <dbReference type="Rhea" id="RHEA-COMP:10232"/>
        <dbReference type="Rhea" id="RHEA-COMP:10233"/>
        <dbReference type="ChEBI" id="CHEBI:15378"/>
        <dbReference type="ChEBI" id="CHEBI:57856"/>
        <dbReference type="ChEBI" id="CHEBI:59789"/>
        <dbReference type="ChEBI" id="CHEBI:74411"/>
        <dbReference type="ChEBI" id="CHEBI:74493"/>
        <dbReference type="EC" id="2.1.1.182"/>
    </reaction>
</comment>
<comment type="subcellular location">
    <subcellularLocation>
        <location evidence="1">Cytoplasm</location>
    </subcellularLocation>
</comment>
<comment type="similarity">
    <text evidence="1">Belongs to the class I-like SAM-binding methyltransferase superfamily. rRNA adenine N(6)-methyltransferase family. RsmA subfamily.</text>
</comment>